<gene>
    <name type="primary">RpS15Aa</name>
    <name type="ORF">GE16163</name>
</gene>
<name>RS15A_DROYA</name>
<accession>Q6XIM8</accession>
<accession>B4Q241</accession>
<proteinExistence type="evidence at transcript level"/>
<feature type="initiator methionine" description="Removed" evidence="1">
    <location>
        <position position="1"/>
    </location>
</feature>
<feature type="chain" id="PRO_0000126610" description="Small ribosomal subunit protein uS8">
    <location>
        <begin position="2"/>
        <end position="130"/>
    </location>
</feature>
<dbReference type="EMBL" id="AY231802">
    <property type="protein sequence ID" value="AAR09825.1"/>
    <property type="molecule type" value="mRNA"/>
</dbReference>
<dbReference type="EMBL" id="CM000162">
    <property type="protein sequence ID" value="EDX01562.1"/>
    <property type="molecule type" value="Genomic_DNA"/>
</dbReference>
<dbReference type="RefSeq" id="XP_002100454.1">
    <property type="nucleotide sequence ID" value="XM_002100418.2"/>
</dbReference>
<dbReference type="SMR" id="Q6XIM8"/>
<dbReference type="IntAct" id="Q6XIM8">
    <property type="interactions" value="1"/>
</dbReference>
<dbReference type="EnsemblMetazoa" id="FBtr0262681">
    <property type="protein sequence ID" value="FBpp0261173"/>
    <property type="gene ID" value="FBgn0068057"/>
</dbReference>
<dbReference type="EnsemblMetazoa" id="FBtr0399605">
    <property type="protein sequence ID" value="FBpp0358625"/>
    <property type="gene ID" value="FBgn0068057"/>
</dbReference>
<dbReference type="EnsemblMetazoa" id="FBtr0399702">
    <property type="protein sequence ID" value="FBpp0358716"/>
    <property type="gene ID" value="FBgn0068057"/>
</dbReference>
<dbReference type="EnsemblMetazoa" id="XM_015190281.3">
    <property type="protein sequence ID" value="XP_015045767.1"/>
    <property type="gene ID" value="LOC6524597"/>
</dbReference>
<dbReference type="EnsemblMetazoa" id="XM_015190282.3">
    <property type="protein sequence ID" value="XP_015045768.1"/>
    <property type="gene ID" value="LOC6524597"/>
</dbReference>
<dbReference type="GeneID" id="6524597"/>
<dbReference type="KEGG" id="dya:Dyak_GE16163"/>
<dbReference type="CTD" id="44150"/>
<dbReference type="eggNOG" id="KOG1754">
    <property type="taxonomic scope" value="Eukaryota"/>
</dbReference>
<dbReference type="HOGENOM" id="CLU_098428_1_1_1"/>
<dbReference type="OMA" id="LPAKNFG"/>
<dbReference type="OrthoDB" id="10250260at2759"/>
<dbReference type="PhylomeDB" id="Q6XIM8"/>
<dbReference type="Proteomes" id="UP000002282">
    <property type="component" value="Chromosome X"/>
</dbReference>
<dbReference type="GO" id="GO:1990904">
    <property type="term" value="C:ribonucleoprotein complex"/>
    <property type="evidence" value="ECO:0007669"/>
    <property type="project" value="UniProtKB-KW"/>
</dbReference>
<dbReference type="GO" id="GO:0005840">
    <property type="term" value="C:ribosome"/>
    <property type="evidence" value="ECO:0007669"/>
    <property type="project" value="UniProtKB-KW"/>
</dbReference>
<dbReference type="GO" id="GO:0003735">
    <property type="term" value="F:structural constituent of ribosome"/>
    <property type="evidence" value="ECO:0007669"/>
    <property type="project" value="InterPro"/>
</dbReference>
<dbReference type="GO" id="GO:0006412">
    <property type="term" value="P:translation"/>
    <property type="evidence" value="ECO:0007669"/>
    <property type="project" value="InterPro"/>
</dbReference>
<dbReference type="FunFam" id="3.30.1370.30:FF:000001">
    <property type="entry name" value="40S ribosomal protein S15a"/>
    <property type="match status" value="1"/>
</dbReference>
<dbReference type="FunFam" id="3.30.1490.10:FF:000002">
    <property type="entry name" value="40S ribosomal protein S15a"/>
    <property type="match status" value="1"/>
</dbReference>
<dbReference type="Gene3D" id="3.30.1370.30">
    <property type="match status" value="1"/>
</dbReference>
<dbReference type="Gene3D" id="3.30.1490.10">
    <property type="match status" value="1"/>
</dbReference>
<dbReference type="InterPro" id="IPR000630">
    <property type="entry name" value="Ribosomal_uS8"/>
</dbReference>
<dbReference type="InterPro" id="IPR047863">
    <property type="entry name" value="Ribosomal_uS8_CS"/>
</dbReference>
<dbReference type="InterPro" id="IPR035987">
    <property type="entry name" value="Ribosomal_uS8_sf"/>
</dbReference>
<dbReference type="NCBIfam" id="NF003115">
    <property type="entry name" value="PRK04034.1"/>
    <property type="match status" value="1"/>
</dbReference>
<dbReference type="PANTHER" id="PTHR11758">
    <property type="entry name" value="40S RIBOSOMAL PROTEIN S15A"/>
    <property type="match status" value="1"/>
</dbReference>
<dbReference type="Pfam" id="PF00410">
    <property type="entry name" value="Ribosomal_S8"/>
    <property type="match status" value="1"/>
</dbReference>
<dbReference type="SUPFAM" id="SSF56047">
    <property type="entry name" value="Ribosomal protein S8"/>
    <property type="match status" value="1"/>
</dbReference>
<dbReference type="PROSITE" id="PS00053">
    <property type="entry name" value="RIBOSOMAL_S8"/>
    <property type="match status" value="1"/>
</dbReference>
<comment type="similarity">
    <text evidence="2">Belongs to the universal ribosomal protein uS8 family.</text>
</comment>
<evidence type="ECO:0000250" key="1"/>
<evidence type="ECO:0000305" key="2"/>
<reference key="1">
    <citation type="journal article" date="2003" name="Genome Res.">
        <title>An evolutionary analysis of orphan genes in Drosophila.</title>
        <authorList>
            <person name="Domazet-Loso T."/>
            <person name="Tautz D."/>
        </authorList>
    </citation>
    <scope>NUCLEOTIDE SEQUENCE [MRNA]</scope>
</reference>
<reference key="2">
    <citation type="journal article" date="2007" name="Nature">
        <title>Evolution of genes and genomes on the Drosophila phylogeny.</title>
        <authorList>
            <consortium name="Drosophila 12 genomes consortium"/>
        </authorList>
    </citation>
    <scope>NUCLEOTIDE SEQUENCE [LARGE SCALE GENOMIC DNA]</scope>
    <source>
        <strain>Tai18E2 / Tucson 14021-0261.01</strain>
    </source>
</reference>
<protein>
    <recommendedName>
        <fullName evidence="2">Small ribosomal subunit protein uS8</fullName>
    </recommendedName>
    <alternativeName>
        <fullName>40S ribosomal protein S15a</fullName>
    </alternativeName>
</protein>
<keyword id="KW-0687">Ribonucleoprotein</keyword>
<keyword id="KW-0689">Ribosomal protein</keyword>
<sequence length="130" mass="14771">MVRMNVLADALKCINNAEKRGKRQVLLRPCSKVIIKFLTVMMKHGYIGEFEIVDDHRSGKIVVNLTGRLNKCGVISPRFDVPINDIEKWTNNLLPSRQFGYVVLTTSGGIMDHEEARRKHLGGKILGFFF</sequence>
<organism>
    <name type="scientific">Drosophila yakuba</name>
    <name type="common">Fruit fly</name>
    <dbReference type="NCBI Taxonomy" id="7245"/>
    <lineage>
        <taxon>Eukaryota</taxon>
        <taxon>Metazoa</taxon>
        <taxon>Ecdysozoa</taxon>
        <taxon>Arthropoda</taxon>
        <taxon>Hexapoda</taxon>
        <taxon>Insecta</taxon>
        <taxon>Pterygota</taxon>
        <taxon>Neoptera</taxon>
        <taxon>Endopterygota</taxon>
        <taxon>Diptera</taxon>
        <taxon>Brachycera</taxon>
        <taxon>Muscomorpha</taxon>
        <taxon>Ephydroidea</taxon>
        <taxon>Drosophilidae</taxon>
        <taxon>Drosophila</taxon>
        <taxon>Sophophora</taxon>
    </lineage>
</organism>